<gene>
    <name evidence="1" type="primary">trmD</name>
    <name type="ordered locus">NTHI0299</name>
</gene>
<reference key="1">
    <citation type="journal article" date="2005" name="J. Bacteriol.">
        <title>Genomic sequence of an otitis media isolate of nontypeable Haemophilus influenzae: comparative study with H. influenzae serotype d, strain KW20.</title>
        <authorList>
            <person name="Harrison A."/>
            <person name="Dyer D.W."/>
            <person name="Gillaspy A."/>
            <person name="Ray W.C."/>
            <person name="Mungur R."/>
            <person name="Carson M.B."/>
            <person name="Zhong H."/>
            <person name="Gipson J."/>
            <person name="Gipson M."/>
            <person name="Johnson L.S."/>
            <person name="Lewis L."/>
            <person name="Bakaletz L.O."/>
            <person name="Munson R.S. Jr."/>
        </authorList>
    </citation>
    <scope>NUCLEOTIDE SEQUENCE [LARGE SCALE GENOMIC DNA]</scope>
    <source>
        <strain>86-028NP</strain>
    </source>
</reference>
<comment type="function">
    <text evidence="1">Specifically methylates guanosine-37 in various tRNAs.</text>
</comment>
<comment type="catalytic activity">
    <reaction evidence="1">
        <text>guanosine(37) in tRNA + S-adenosyl-L-methionine = N(1)-methylguanosine(37) in tRNA + S-adenosyl-L-homocysteine + H(+)</text>
        <dbReference type="Rhea" id="RHEA:36899"/>
        <dbReference type="Rhea" id="RHEA-COMP:10145"/>
        <dbReference type="Rhea" id="RHEA-COMP:10147"/>
        <dbReference type="ChEBI" id="CHEBI:15378"/>
        <dbReference type="ChEBI" id="CHEBI:57856"/>
        <dbReference type="ChEBI" id="CHEBI:59789"/>
        <dbReference type="ChEBI" id="CHEBI:73542"/>
        <dbReference type="ChEBI" id="CHEBI:74269"/>
        <dbReference type="EC" id="2.1.1.228"/>
    </reaction>
</comment>
<comment type="subunit">
    <text evidence="1">Homodimer.</text>
</comment>
<comment type="subcellular location">
    <subcellularLocation>
        <location evidence="1">Cytoplasm</location>
    </subcellularLocation>
</comment>
<comment type="similarity">
    <text evidence="1">Belongs to the RNA methyltransferase TrmD family.</text>
</comment>
<dbReference type="EC" id="2.1.1.228" evidence="1"/>
<dbReference type="EMBL" id="CP000057">
    <property type="protein sequence ID" value="AAX87259.1"/>
    <property type="molecule type" value="Genomic_DNA"/>
</dbReference>
<dbReference type="RefSeq" id="WP_011271922.1">
    <property type="nucleotide sequence ID" value="NC_007146.2"/>
</dbReference>
<dbReference type="SMR" id="Q4QNY8"/>
<dbReference type="GeneID" id="93219138"/>
<dbReference type="KEGG" id="hit:NTHI0299"/>
<dbReference type="HOGENOM" id="CLU_047363_0_1_6"/>
<dbReference type="Proteomes" id="UP000002525">
    <property type="component" value="Chromosome"/>
</dbReference>
<dbReference type="GO" id="GO:0005829">
    <property type="term" value="C:cytosol"/>
    <property type="evidence" value="ECO:0007669"/>
    <property type="project" value="TreeGrafter"/>
</dbReference>
<dbReference type="GO" id="GO:0052906">
    <property type="term" value="F:tRNA (guanine(37)-N1)-methyltransferase activity"/>
    <property type="evidence" value="ECO:0007669"/>
    <property type="project" value="UniProtKB-UniRule"/>
</dbReference>
<dbReference type="GO" id="GO:0002939">
    <property type="term" value="P:tRNA N1-guanine methylation"/>
    <property type="evidence" value="ECO:0007669"/>
    <property type="project" value="TreeGrafter"/>
</dbReference>
<dbReference type="CDD" id="cd18080">
    <property type="entry name" value="TrmD-like"/>
    <property type="match status" value="1"/>
</dbReference>
<dbReference type="FunFam" id="1.10.1270.20:FF:000001">
    <property type="entry name" value="tRNA (guanine-N(1)-)-methyltransferase"/>
    <property type="match status" value="1"/>
</dbReference>
<dbReference type="FunFam" id="3.40.1280.10:FF:000001">
    <property type="entry name" value="tRNA (guanine-N(1)-)-methyltransferase"/>
    <property type="match status" value="1"/>
</dbReference>
<dbReference type="Gene3D" id="3.40.1280.10">
    <property type="match status" value="1"/>
</dbReference>
<dbReference type="Gene3D" id="1.10.1270.20">
    <property type="entry name" value="tRNA(m1g37)methyltransferase, domain 2"/>
    <property type="match status" value="1"/>
</dbReference>
<dbReference type="HAMAP" id="MF_00605">
    <property type="entry name" value="TrmD"/>
    <property type="match status" value="1"/>
</dbReference>
<dbReference type="InterPro" id="IPR029028">
    <property type="entry name" value="Alpha/beta_knot_MTases"/>
</dbReference>
<dbReference type="InterPro" id="IPR023148">
    <property type="entry name" value="tRNA_m1G_MeTrfase_C_sf"/>
</dbReference>
<dbReference type="InterPro" id="IPR002649">
    <property type="entry name" value="tRNA_m1G_MeTrfase_TrmD"/>
</dbReference>
<dbReference type="InterPro" id="IPR029026">
    <property type="entry name" value="tRNA_m1G_MTases_N"/>
</dbReference>
<dbReference type="InterPro" id="IPR016009">
    <property type="entry name" value="tRNA_MeTrfase_TRMD/TRM10"/>
</dbReference>
<dbReference type="NCBIfam" id="NF000648">
    <property type="entry name" value="PRK00026.1"/>
    <property type="match status" value="1"/>
</dbReference>
<dbReference type="NCBIfam" id="TIGR00088">
    <property type="entry name" value="trmD"/>
    <property type="match status" value="1"/>
</dbReference>
<dbReference type="PANTHER" id="PTHR46417">
    <property type="entry name" value="TRNA (GUANINE-N(1)-)-METHYLTRANSFERASE"/>
    <property type="match status" value="1"/>
</dbReference>
<dbReference type="PANTHER" id="PTHR46417:SF1">
    <property type="entry name" value="TRNA (GUANINE-N(1)-)-METHYLTRANSFERASE"/>
    <property type="match status" value="1"/>
</dbReference>
<dbReference type="Pfam" id="PF01746">
    <property type="entry name" value="tRNA_m1G_MT"/>
    <property type="match status" value="1"/>
</dbReference>
<dbReference type="PIRSF" id="PIRSF000386">
    <property type="entry name" value="tRNA_mtase"/>
    <property type="match status" value="1"/>
</dbReference>
<dbReference type="SUPFAM" id="SSF75217">
    <property type="entry name" value="alpha/beta knot"/>
    <property type="match status" value="1"/>
</dbReference>
<feature type="chain" id="PRO_0000060386" description="tRNA (guanine-N(1)-)-methyltransferase">
    <location>
        <begin position="1"/>
        <end position="246"/>
    </location>
</feature>
<feature type="binding site" evidence="1">
    <location>
        <position position="113"/>
    </location>
    <ligand>
        <name>S-adenosyl-L-methionine</name>
        <dbReference type="ChEBI" id="CHEBI:59789"/>
    </ligand>
</feature>
<feature type="binding site" evidence="1">
    <location>
        <begin position="133"/>
        <end position="138"/>
    </location>
    <ligand>
        <name>S-adenosyl-L-methionine</name>
        <dbReference type="ChEBI" id="CHEBI:59789"/>
    </ligand>
</feature>
<proteinExistence type="inferred from homology"/>
<keyword id="KW-0963">Cytoplasm</keyword>
<keyword id="KW-0489">Methyltransferase</keyword>
<keyword id="KW-0949">S-adenosyl-L-methionine</keyword>
<keyword id="KW-0808">Transferase</keyword>
<keyword id="KW-0819">tRNA processing</keyword>
<name>TRMD_HAEI8</name>
<accession>Q4QNY8</accession>
<evidence type="ECO:0000255" key="1">
    <source>
        <dbReference type="HAMAP-Rule" id="MF_00605"/>
    </source>
</evidence>
<sequence>MWIGVISLFPEMFKAITEFGVTGRAVKHNLLKVECWNPRNFTFDKHKTVDDRPYGGGPGMLMMVQPLRDAIHTAKAAAGEGAKVIYLSPQGRKLDQDGVTELAQNQKLILVCGRYEGIDERLIQTEIDEEWSIGDYVLTGGELPAMTLIDAVARFIPGVLGKQASAEEDSFADGLLDCPHYTRPEVLEGLTVPPVLMSGHHEEIRKWRLKQSLQRTWFRRPELLEGLALTDEQRKLLKEAQAEHNS</sequence>
<protein>
    <recommendedName>
        <fullName evidence="1">tRNA (guanine-N(1)-)-methyltransferase</fullName>
        <ecNumber evidence="1">2.1.1.228</ecNumber>
    </recommendedName>
    <alternativeName>
        <fullName evidence="1">M1G-methyltransferase</fullName>
    </alternativeName>
    <alternativeName>
        <fullName evidence="1">tRNA [GM37] methyltransferase</fullName>
    </alternativeName>
</protein>
<organism>
    <name type="scientific">Haemophilus influenzae (strain 86-028NP)</name>
    <dbReference type="NCBI Taxonomy" id="281310"/>
    <lineage>
        <taxon>Bacteria</taxon>
        <taxon>Pseudomonadati</taxon>
        <taxon>Pseudomonadota</taxon>
        <taxon>Gammaproteobacteria</taxon>
        <taxon>Pasteurellales</taxon>
        <taxon>Pasteurellaceae</taxon>
        <taxon>Haemophilus</taxon>
    </lineage>
</organism>